<reference key="1">
    <citation type="journal article" date="2007" name="Science">
        <title>Genome sequence of Aedes aegypti, a major arbovirus vector.</title>
        <authorList>
            <person name="Nene V."/>
            <person name="Wortman J.R."/>
            <person name="Lawson D."/>
            <person name="Haas B.J."/>
            <person name="Kodira C.D."/>
            <person name="Tu Z.J."/>
            <person name="Loftus B.J."/>
            <person name="Xi Z."/>
            <person name="Megy K."/>
            <person name="Grabherr M."/>
            <person name="Ren Q."/>
            <person name="Zdobnov E.M."/>
            <person name="Lobo N.F."/>
            <person name="Campbell K.S."/>
            <person name="Brown S.E."/>
            <person name="Bonaldo M.F."/>
            <person name="Zhu J."/>
            <person name="Sinkins S.P."/>
            <person name="Hogenkamp D.G."/>
            <person name="Amedeo P."/>
            <person name="Arensburger P."/>
            <person name="Atkinson P.W."/>
            <person name="Bidwell S.L."/>
            <person name="Biedler J."/>
            <person name="Birney E."/>
            <person name="Bruggner R.V."/>
            <person name="Costas J."/>
            <person name="Coy M.R."/>
            <person name="Crabtree J."/>
            <person name="Crawford M."/>
            <person name="DeBruyn B."/>
            <person name="DeCaprio D."/>
            <person name="Eiglmeier K."/>
            <person name="Eisenstadt E."/>
            <person name="El-Dorry H."/>
            <person name="Gelbart W.M."/>
            <person name="Gomes S.L."/>
            <person name="Hammond M."/>
            <person name="Hannick L.I."/>
            <person name="Hogan J.R."/>
            <person name="Holmes M.H."/>
            <person name="Jaffe D."/>
            <person name="Johnston S.J."/>
            <person name="Kennedy R.C."/>
            <person name="Koo H."/>
            <person name="Kravitz S."/>
            <person name="Kriventseva E.V."/>
            <person name="Kulp D."/>
            <person name="Labutti K."/>
            <person name="Lee E."/>
            <person name="Li S."/>
            <person name="Lovin D.D."/>
            <person name="Mao C."/>
            <person name="Mauceli E."/>
            <person name="Menck C.F."/>
            <person name="Miller J.R."/>
            <person name="Montgomery P."/>
            <person name="Mori A."/>
            <person name="Nascimento A.L."/>
            <person name="Naveira H.F."/>
            <person name="Nusbaum C."/>
            <person name="O'Leary S.B."/>
            <person name="Orvis J."/>
            <person name="Pertea M."/>
            <person name="Quesneville H."/>
            <person name="Reidenbach K.R."/>
            <person name="Rogers Y.-H.C."/>
            <person name="Roth C.W."/>
            <person name="Schneider J.R."/>
            <person name="Schatz M."/>
            <person name="Shumway M."/>
            <person name="Stanke M."/>
            <person name="Stinson E.O."/>
            <person name="Tubio J.M.C."/>
            <person name="Vanzee J.P."/>
            <person name="Verjovski-Almeida S."/>
            <person name="Werner D."/>
            <person name="White O.R."/>
            <person name="Wyder S."/>
            <person name="Zeng Q."/>
            <person name="Zhao Q."/>
            <person name="Zhao Y."/>
            <person name="Hill C.A."/>
            <person name="Raikhel A.S."/>
            <person name="Soares M.B."/>
            <person name="Knudson D.L."/>
            <person name="Lee N.H."/>
            <person name="Galagan J."/>
            <person name="Salzberg S.L."/>
            <person name="Paulsen I.T."/>
            <person name="Dimopoulos G."/>
            <person name="Collins F.H."/>
            <person name="Bruce B."/>
            <person name="Fraser-Liggett C.M."/>
            <person name="Severson D.W."/>
        </authorList>
    </citation>
    <scope>NUCLEOTIDE SEQUENCE [LARGE SCALE GENOMIC DNA]</scope>
    <source>
        <strain>LVPib12</strain>
    </source>
</reference>
<proteinExistence type="inferred from homology"/>
<comment type="function">
    <text evidence="1">Plays a central role in 2-thiolation of mcm(5)S(2)U at tRNA wobble positions of tRNA(Lys), tRNA(Glu) and tRNA(Gln). May act by forming a heterodimer with NCS6/CTU1 that ligates sulfur from thiocarboxylated URM1 onto the uridine of tRNAs at wobble position.</text>
</comment>
<comment type="pathway">
    <text evidence="1">tRNA modification; 5-methoxycarbonylmethyl-2-thiouridine-tRNA biosynthesis.</text>
</comment>
<comment type="subcellular location">
    <subcellularLocation>
        <location evidence="1">Cytoplasm</location>
    </subcellularLocation>
</comment>
<comment type="similarity">
    <text evidence="1">Belongs to the CTU2/NCS2 family.</text>
</comment>
<sequence>MCSIGEDDFGDEGGVHAMKEESPLPEGATTIEQEICRKCNDQRAVLKLNQKEPQCRECFLHYVRHKFRASLGATKIVRRGSKVMVVFNGAPENVVMLDMVRHGLEQEAFKKLRVDPVVVFVGEDFIGRDQEGYEQSVREKVQILRQFGFPAYYTVLGAQDSCSIEDNCLAGKFIGDQDKVTKVLQGIKSITSKQDFIVQTRKQTYKAIAKKLECGYIFLSSIGLELAKTLLSDVSLGRGKSLALDIAFCDDRDEERKIIRPMRDLNPEEIEYYLKFAENQLQSVAIVDPYLDKSSLQNLTSKFVDGLQLSFPSTVSTVFRTGDKLGAEKIPTCDNQLEDDDHFATLFDKSLKLESNAEEPRKCKFCHSALDYRDSTTLFATEFSRMVSSRINVQLSHEEIIESTKLMEQDACKLVNAELEDDEMRQLKRELCHACRNILVDFDGK</sequence>
<evidence type="ECO:0000255" key="1">
    <source>
        <dbReference type="HAMAP-Rule" id="MF_03054"/>
    </source>
</evidence>
<evidence type="ECO:0000256" key="2">
    <source>
        <dbReference type="SAM" id="MobiDB-lite"/>
    </source>
</evidence>
<keyword id="KW-0963">Cytoplasm</keyword>
<keyword id="KW-1185">Reference proteome</keyword>
<keyword id="KW-0819">tRNA processing</keyword>
<dbReference type="EMBL" id="CH477233">
    <property type="protein sequence ID" value="EAT46787.1"/>
    <property type="molecule type" value="Genomic_DNA"/>
</dbReference>
<dbReference type="RefSeq" id="XP_001654590.1">
    <property type="nucleotide sequence ID" value="XM_001654540.1"/>
</dbReference>
<dbReference type="SMR" id="Q17JB7"/>
<dbReference type="FunCoup" id="Q17JB7">
    <property type="interactions" value="1737"/>
</dbReference>
<dbReference type="STRING" id="7159.Q17JB7"/>
<dbReference type="PaxDb" id="7159-AAEL002056-PA"/>
<dbReference type="GeneID" id="5573416"/>
<dbReference type="KEGG" id="aag:5573416"/>
<dbReference type="CTD" id="348180"/>
<dbReference type="VEuPathDB" id="VectorBase:AAEL002056"/>
<dbReference type="eggNOG" id="KOG2594">
    <property type="taxonomic scope" value="Eukaryota"/>
</dbReference>
<dbReference type="HOGENOM" id="CLU_024534_2_1_1"/>
<dbReference type="InParanoid" id="Q17JB7"/>
<dbReference type="OMA" id="CHACRNI"/>
<dbReference type="OrthoDB" id="25129at2759"/>
<dbReference type="PhylomeDB" id="Q17JB7"/>
<dbReference type="UniPathway" id="UPA00988"/>
<dbReference type="Proteomes" id="UP000008820">
    <property type="component" value="Unassembled WGS sequence"/>
</dbReference>
<dbReference type="Proteomes" id="UP000682892">
    <property type="component" value="Chromosome 2"/>
</dbReference>
<dbReference type="GO" id="GO:0005829">
    <property type="term" value="C:cytosol"/>
    <property type="evidence" value="ECO:0000250"/>
    <property type="project" value="UniProtKB"/>
</dbReference>
<dbReference type="GO" id="GO:0016779">
    <property type="term" value="F:nucleotidyltransferase activity"/>
    <property type="evidence" value="ECO:0007669"/>
    <property type="project" value="UniProtKB-UniRule"/>
</dbReference>
<dbReference type="GO" id="GO:0016783">
    <property type="term" value="F:sulfurtransferase activity"/>
    <property type="evidence" value="ECO:0007669"/>
    <property type="project" value="TreeGrafter"/>
</dbReference>
<dbReference type="GO" id="GO:0000049">
    <property type="term" value="F:tRNA binding"/>
    <property type="evidence" value="ECO:0007669"/>
    <property type="project" value="InterPro"/>
</dbReference>
<dbReference type="GO" id="GO:0032447">
    <property type="term" value="P:protein urmylation"/>
    <property type="evidence" value="ECO:0007669"/>
    <property type="project" value="UniProtKB-UniRule"/>
</dbReference>
<dbReference type="GO" id="GO:0034227">
    <property type="term" value="P:tRNA thio-modification"/>
    <property type="evidence" value="ECO:0000250"/>
    <property type="project" value="UniProtKB"/>
</dbReference>
<dbReference type="GO" id="GO:0002143">
    <property type="term" value="P:tRNA wobble position uridine thiolation"/>
    <property type="evidence" value="ECO:0007669"/>
    <property type="project" value="TreeGrafter"/>
</dbReference>
<dbReference type="GO" id="GO:0002098">
    <property type="term" value="P:tRNA wobble uridine modification"/>
    <property type="evidence" value="ECO:0000250"/>
    <property type="project" value="UniProtKB"/>
</dbReference>
<dbReference type="FunFam" id="3.40.50.620:FF:000229">
    <property type="entry name" value="Cytoplasmic tRNA 2-thiolation protein 2"/>
    <property type="match status" value="1"/>
</dbReference>
<dbReference type="Gene3D" id="3.40.50.620">
    <property type="entry name" value="HUPs"/>
    <property type="match status" value="1"/>
</dbReference>
<dbReference type="HAMAP" id="MF_03054">
    <property type="entry name" value="CTU2"/>
    <property type="match status" value="1"/>
</dbReference>
<dbReference type="InterPro" id="IPR019407">
    <property type="entry name" value="CTU2"/>
</dbReference>
<dbReference type="InterPro" id="IPR014729">
    <property type="entry name" value="Rossmann-like_a/b/a_fold"/>
</dbReference>
<dbReference type="PANTHER" id="PTHR20882">
    <property type="entry name" value="CYTOPLASMIC TRNA 2-THIOLATION PROTEIN 2"/>
    <property type="match status" value="1"/>
</dbReference>
<dbReference type="PANTHER" id="PTHR20882:SF14">
    <property type="entry name" value="CYTOPLASMIC TRNA 2-THIOLATION PROTEIN 2"/>
    <property type="match status" value="1"/>
</dbReference>
<dbReference type="Pfam" id="PF10288">
    <property type="entry name" value="CTU2"/>
    <property type="match status" value="1"/>
</dbReference>
<dbReference type="SUPFAM" id="SSF52402">
    <property type="entry name" value="Adenine nucleotide alpha hydrolases-like"/>
    <property type="match status" value="1"/>
</dbReference>
<organism>
    <name type="scientific">Aedes aegypti</name>
    <name type="common">Yellowfever mosquito</name>
    <name type="synonym">Culex aegypti</name>
    <dbReference type="NCBI Taxonomy" id="7159"/>
    <lineage>
        <taxon>Eukaryota</taxon>
        <taxon>Metazoa</taxon>
        <taxon>Ecdysozoa</taxon>
        <taxon>Arthropoda</taxon>
        <taxon>Hexapoda</taxon>
        <taxon>Insecta</taxon>
        <taxon>Pterygota</taxon>
        <taxon>Neoptera</taxon>
        <taxon>Endopterygota</taxon>
        <taxon>Diptera</taxon>
        <taxon>Nematocera</taxon>
        <taxon>Culicoidea</taxon>
        <taxon>Culicidae</taxon>
        <taxon>Culicinae</taxon>
        <taxon>Aedini</taxon>
        <taxon>Aedes</taxon>
        <taxon>Stegomyia</taxon>
    </lineage>
</organism>
<feature type="chain" id="PRO_0000369267" description="Cytoplasmic tRNA 2-thiolation protein 2">
    <location>
        <begin position="1"/>
        <end position="445"/>
    </location>
</feature>
<feature type="region of interest" description="Disordered" evidence="2">
    <location>
        <begin position="1"/>
        <end position="26"/>
    </location>
</feature>
<feature type="compositionally biased region" description="Acidic residues" evidence="2">
    <location>
        <begin position="1"/>
        <end position="11"/>
    </location>
</feature>
<feature type="compositionally biased region" description="Basic and acidic residues" evidence="2">
    <location>
        <begin position="13"/>
        <end position="22"/>
    </location>
</feature>
<accession>Q17JB7</accession>
<gene>
    <name type="ORF">AAEL002056</name>
</gene>
<protein>
    <recommendedName>
        <fullName evidence="1">Cytoplasmic tRNA 2-thiolation protein 2</fullName>
    </recommendedName>
</protein>
<name>CTU2_AEDAE</name>